<keyword id="KW-0010">Activator</keyword>
<keyword id="KW-1015">Disulfide bond</keyword>
<keyword id="KW-0238">DNA-binding</keyword>
<keyword id="KW-0318">Glutathionylation</keyword>
<keyword id="KW-0558">Oxidation</keyword>
<keyword id="KW-1185">Reference proteome</keyword>
<keyword id="KW-0702">S-nitrosylation</keyword>
<keyword id="KW-0804">Transcription</keyword>
<keyword id="KW-0805">Transcription regulation</keyword>
<dbReference type="EMBL" id="AE014075">
    <property type="protein sequence ID" value="AAN83350.1"/>
    <property type="status" value="ALT_INIT"/>
    <property type="molecule type" value="Genomic_DNA"/>
</dbReference>
<dbReference type="RefSeq" id="WP_001025939.1">
    <property type="nucleotide sequence ID" value="NZ_CP051263.1"/>
</dbReference>
<dbReference type="SMR" id="P0ACQ5"/>
<dbReference type="STRING" id="199310.c4922"/>
<dbReference type="GeneID" id="75203207"/>
<dbReference type="KEGG" id="ecc:c4922"/>
<dbReference type="eggNOG" id="COG0583">
    <property type="taxonomic scope" value="Bacteria"/>
</dbReference>
<dbReference type="HOGENOM" id="CLU_039613_6_4_6"/>
<dbReference type="Proteomes" id="UP000001410">
    <property type="component" value="Chromosome"/>
</dbReference>
<dbReference type="GO" id="GO:0032993">
    <property type="term" value="C:protein-DNA complex"/>
    <property type="evidence" value="ECO:0007669"/>
    <property type="project" value="TreeGrafter"/>
</dbReference>
<dbReference type="GO" id="GO:0003677">
    <property type="term" value="F:DNA binding"/>
    <property type="evidence" value="ECO:0007669"/>
    <property type="project" value="UniProtKB-KW"/>
</dbReference>
<dbReference type="GO" id="GO:0003700">
    <property type="term" value="F:DNA-binding transcription factor activity"/>
    <property type="evidence" value="ECO:0007669"/>
    <property type="project" value="InterPro"/>
</dbReference>
<dbReference type="CDD" id="cd08411">
    <property type="entry name" value="PBP2_OxyR"/>
    <property type="match status" value="1"/>
</dbReference>
<dbReference type="FunFam" id="3.40.190.10:FF:000027">
    <property type="entry name" value="DNA-binding transcriptional regulator OxyR"/>
    <property type="match status" value="1"/>
</dbReference>
<dbReference type="FunFam" id="1.10.10.10:FF:000001">
    <property type="entry name" value="LysR family transcriptional regulator"/>
    <property type="match status" value="1"/>
</dbReference>
<dbReference type="Gene3D" id="3.40.190.10">
    <property type="entry name" value="Periplasmic binding protein-like II"/>
    <property type="match status" value="2"/>
</dbReference>
<dbReference type="Gene3D" id="1.10.10.10">
    <property type="entry name" value="Winged helix-like DNA-binding domain superfamily/Winged helix DNA-binding domain"/>
    <property type="match status" value="1"/>
</dbReference>
<dbReference type="InterPro" id="IPR005119">
    <property type="entry name" value="LysR_subst-bd"/>
</dbReference>
<dbReference type="InterPro" id="IPR000847">
    <property type="entry name" value="Tscrpt_reg_HTH_LysR"/>
</dbReference>
<dbReference type="InterPro" id="IPR036388">
    <property type="entry name" value="WH-like_DNA-bd_sf"/>
</dbReference>
<dbReference type="InterPro" id="IPR036390">
    <property type="entry name" value="WH_DNA-bd_sf"/>
</dbReference>
<dbReference type="NCBIfam" id="NF008361">
    <property type="entry name" value="PRK11151.1"/>
    <property type="match status" value="1"/>
</dbReference>
<dbReference type="PANTHER" id="PTHR30346:SF26">
    <property type="entry name" value="HYDROGEN PEROXIDE-INDUCIBLE GENES ACTIVATOR"/>
    <property type="match status" value="1"/>
</dbReference>
<dbReference type="PANTHER" id="PTHR30346">
    <property type="entry name" value="TRANSCRIPTIONAL DUAL REGULATOR HCAR-RELATED"/>
    <property type="match status" value="1"/>
</dbReference>
<dbReference type="Pfam" id="PF00126">
    <property type="entry name" value="HTH_1"/>
    <property type="match status" value="1"/>
</dbReference>
<dbReference type="Pfam" id="PF03466">
    <property type="entry name" value="LysR_substrate"/>
    <property type="match status" value="1"/>
</dbReference>
<dbReference type="PRINTS" id="PR00039">
    <property type="entry name" value="HTHLYSR"/>
</dbReference>
<dbReference type="SUPFAM" id="SSF53850">
    <property type="entry name" value="Periplasmic binding protein-like II"/>
    <property type="match status" value="1"/>
</dbReference>
<dbReference type="SUPFAM" id="SSF46785">
    <property type="entry name" value="Winged helix' DNA-binding domain"/>
    <property type="match status" value="1"/>
</dbReference>
<dbReference type="PROSITE" id="PS50931">
    <property type="entry name" value="HTH_LYSR"/>
    <property type="match status" value="1"/>
</dbReference>
<accession>P0ACQ5</accession>
<accession>P11721</accession>
<accession>P22471</accession>
<organism>
    <name type="scientific">Escherichia coli O6:H1 (strain CFT073 / ATCC 700928 / UPEC)</name>
    <dbReference type="NCBI Taxonomy" id="199310"/>
    <lineage>
        <taxon>Bacteria</taxon>
        <taxon>Pseudomonadati</taxon>
        <taxon>Pseudomonadota</taxon>
        <taxon>Gammaproteobacteria</taxon>
        <taxon>Enterobacterales</taxon>
        <taxon>Enterobacteriaceae</taxon>
        <taxon>Escherichia</taxon>
    </lineage>
</organism>
<proteinExistence type="inferred from homology"/>
<gene>
    <name type="primary">oxyR</name>
    <name type="ordered locus">c4922</name>
</gene>
<reference key="1">
    <citation type="journal article" date="2002" name="Proc. Natl. Acad. Sci. U.S.A.">
        <title>Extensive mosaic structure revealed by the complete genome sequence of uropathogenic Escherichia coli.</title>
        <authorList>
            <person name="Welch R.A."/>
            <person name="Burland V."/>
            <person name="Plunkett G. III"/>
            <person name="Redford P."/>
            <person name="Roesch P."/>
            <person name="Rasko D."/>
            <person name="Buckles E.L."/>
            <person name="Liou S.-R."/>
            <person name="Boutin A."/>
            <person name="Hackett J."/>
            <person name="Stroud D."/>
            <person name="Mayhew G.F."/>
            <person name="Rose D.J."/>
            <person name="Zhou S."/>
            <person name="Schwartz D.C."/>
            <person name="Perna N.T."/>
            <person name="Mobley H.L.T."/>
            <person name="Donnenberg M.S."/>
            <person name="Blattner F.R."/>
        </authorList>
    </citation>
    <scope>NUCLEOTIDE SEQUENCE [LARGE SCALE GENOMIC DNA]</scope>
    <source>
        <strain>CFT073 / ATCC 700928 / UPEC</strain>
    </source>
</reference>
<name>OXYR_ECOL6</name>
<comment type="function">
    <text evidence="1">Hydrogen peroxide sensor. Activates the expression of a regulon of hydrogen peroxide-inducible genes such as katG, gor, ahpC, ahpF, oxyS (a regulatory RNA), dps, fur and grxA. OxyR expression is negatively autoregulated by binding to a 43 bp region upstream of its own coding sequence. OxyR is inactivated by reduction of its essential disulfide bond by the product of GrxA, itself positively regulated by OxyR. Also has a positive regulatory effect on the production of surface proteins that control the colony morphology and auto-aggregation ability (By similarity).</text>
</comment>
<comment type="activity regulation">
    <text evidence="1">Activated by oxidation of Cys-199 resulting in the alternative formation of cystine, sulfenic acid, S-nitroso- or glutathione-bound cysteine.</text>
</comment>
<comment type="subunit">
    <text evidence="1">Homodimer and homotetramer.</text>
</comment>
<comment type="PTM">
    <text evidence="1">Oxidized on Cys-199; the Cys-SOH formed in response to oxidative signaling triggers a conformational change and the onset of transcriptional activity with a specific DNA-binding affinity. Cys-199-SOH rapidly reacts with Cys-208-SH to form a disulfide bond (By similarity).</text>
</comment>
<comment type="PTM">
    <text evidence="1">S-nitrosylation in response to nitrosative signaling triggers a conformational change and the onset of transcriptional activity with a specific DNA-binding affinity.</text>
</comment>
<comment type="PTM">
    <text evidence="1">Glutathionylation in response to redox signaling triggers the onset of transcriptional activity with a specific DNA-binding affinity.</text>
</comment>
<comment type="miscellaneous">
    <text evidence="1">Oxidized OxyR can be reduced and inactivated by glutaredoxin 1, the product of grxA, whose expression is regulated by OxyR itself.</text>
</comment>
<comment type="similarity">
    <text evidence="3">Belongs to the LysR transcriptional regulatory family.</text>
</comment>
<comment type="sequence caution" evidence="3">
    <conflict type="erroneous initiation">
        <sequence resource="EMBL-CDS" id="AAN83350"/>
    </conflict>
</comment>
<feature type="chain" id="PRO_0000105730" description="Hydrogen peroxide-inducible genes activator">
    <location>
        <begin position="1"/>
        <end position="305"/>
    </location>
</feature>
<feature type="domain" description="HTH lysR-type" evidence="2">
    <location>
        <begin position="1"/>
        <end position="58"/>
    </location>
</feature>
<feature type="DNA-binding region" description="H-T-H motif" evidence="2">
    <location>
        <begin position="18"/>
        <end position="37"/>
    </location>
</feature>
<feature type="modified residue" description="Cysteine sulfenic acid (-SOH); alternate" evidence="1">
    <location>
        <position position="199"/>
    </location>
</feature>
<feature type="modified residue" description="S-glutathionyl cysteine; alternate" evidence="1">
    <location>
        <position position="199"/>
    </location>
</feature>
<feature type="modified residue" description="S-nitrosocysteine; alternate" evidence="1">
    <location>
        <position position="199"/>
    </location>
</feature>
<feature type="disulfide bond" evidence="1">
    <location>
        <begin position="180"/>
        <end position="259"/>
    </location>
</feature>
<feature type="disulfide bond" description="Alternate" evidence="1">
    <location>
        <begin position="199"/>
        <end position="208"/>
    </location>
</feature>
<protein>
    <recommendedName>
        <fullName>Hydrogen peroxide-inducible genes activator</fullName>
    </recommendedName>
    <alternativeName>
        <fullName>Morphology and auto-aggregation control protein</fullName>
    </alternativeName>
</protein>
<sequence length="305" mass="34276">MNIRDLEYLVALAEHRHFRRAADSCHVSQPTLSGQIRKLEDELGVMLLERTSRKVLFTQAGMLLVDQARTVLREVKVLKEMASQQGETMSGPLHIGLIPTVGPYLLPHIIPMLHQTFPKLEMYLHEAQTHQLLAQLDSGKLDCVILALVKESEAFIEVPLFDEPMLLAIYEDHPWANRECVPMADLAGEKLLMLEDGHCLRDQAMGFCFEAGADEDTHFRATSLETLRNMVAAGSGITLLPALAVPPERKRDGVVYLPCIKPEPRRTIGLVYRPGSPLRSRYEQLAEAIRARMDGHFDKVLKQAV</sequence>
<evidence type="ECO:0000250" key="1"/>
<evidence type="ECO:0000255" key="2">
    <source>
        <dbReference type="PROSITE-ProRule" id="PRU00253"/>
    </source>
</evidence>
<evidence type="ECO:0000305" key="3"/>